<keyword id="KW-1185">Reference proteome</keyword>
<organism>
    <name type="scientific">Enterobacteria phage T4</name>
    <name type="common">Bacteriophage T4</name>
    <dbReference type="NCBI Taxonomy" id="10665"/>
    <lineage>
        <taxon>Viruses</taxon>
        <taxon>Duplodnaviria</taxon>
        <taxon>Heunggongvirae</taxon>
        <taxon>Uroviricota</taxon>
        <taxon>Caudoviricetes</taxon>
        <taxon>Straboviridae</taxon>
        <taxon>Tevenvirinae</taxon>
        <taxon>Tequatrovirus</taxon>
    </lineage>
</organism>
<proteinExistence type="predicted"/>
<sequence>MVYVYAIVYRDKDGFTAPVPLDEHRPAVFFEWKIADKVFTTLKEQYRLALGKGIPRLVETPRKFWFNKIEVKHVKPDVDTQRLYQRILDTGRIVSIPIAGNLR</sequence>
<name>Y01A_BPT4</name>
<accession>P39419</accession>
<reference key="1">
    <citation type="journal article" date="2003" name="Microbiol. Mol. Biol. Rev.">
        <title>Bacteriophage T4 genome.</title>
        <authorList>
            <person name="Miller E.S."/>
            <person name="Kutter E."/>
            <person name="Mosig G."/>
            <person name="Arisaka F."/>
            <person name="Kunisawa T."/>
            <person name="Ruger W."/>
        </authorList>
    </citation>
    <scope>NUCLEOTIDE SEQUENCE [LARGE SCALE GENOMIC DNA]</scope>
</reference>
<gene>
    <name type="primary">y01A</name>
    <name type="synonym">dda.1</name>
</gene>
<dbReference type="EMBL" id="AF158101">
    <property type="protein sequence ID" value="AAD42556.1"/>
    <property type="molecule type" value="Genomic_DNA"/>
</dbReference>
<dbReference type="RefSeq" id="NP_049633.1">
    <property type="nucleotide sequence ID" value="NC_000866.4"/>
</dbReference>
<dbReference type="GeneID" id="1258786"/>
<dbReference type="KEGG" id="vg:1258786"/>
<dbReference type="OrthoDB" id="16232at10239"/>
<dbReference type="Proteomes" id="UP000009087">
    <property type="component" value="Segment"/>
</dbReference>
<feature type="chain" id="PRO_0000165084" description="Uncharacterized 12.1 kDa protein in dda-modA intergenic region">
    <location>
        <begin position="1"/>
        <end position="103"/>
    </location>
</feature>
<organismHost>
    <name type="scientific">Escherichia coli</name>
    <dbReference type="NCBI Taxonomy" id="562"/>
</organismHost>
<protein>
    <recommendedName>
        <fullName>Uncharacterized 12.1 kDa protein in dda-modA intergenic region</fullName>
    </recommendedName>
</protein>